<keyword id="KW-0472">Membrane</keyword>
<keyword id="KW-1185">Reference proteome</keyword>
<keyword id="KW-0812">Transmembrane</keyword>
<keyword id="KW-1133">Transmembrane helix</keyword>
<feature type="chain" id="PRO_0000336098" description="Schlafen family member 12-like">
    <location>
        <begin position="1"/>
        <end position="619"/>
    </location>
</feature>
<feature type="transmembrane region" description="Helical" evidence="1">
    <location>
        <begin position="598"/>
        <end position="618"/>
    </location>
</feature>
<sequence>MQLSEGLAAHGTRRAGKWKRTQVPLLGEECADMDLARKEFLLGNGLAAGKMNISIDLDTNYAELVLNVGRVTLGENNRRKMKDSQLRKQQNENVSRAVCALLNSGGGFIKAEVENEDYSYKKDGIGLDLENSFSNMLPFVPNFLDFMQNGNYFHIFVKSWSLETSGPQIATLSSSLYKRDVTSAKVMNASAALEFLKDMEKTGGRAYLRPESPAKRACVDVQEESNMEALAADFFNRTELNYKEKLTFTESTHVEIKNFATEKLLQRITEILPQYVSAFANTDGGYLFVGLNEDKEIIGFKAEKSYLTKLEEVTKNSIGKLPVHHFCVEKGTINYLCKSLGVYDKGRLCGYVYALRVERFCCAVFAKKPDSWHVKDNRVKQLTEKEWIQFMVDSESVCEELPSPASTSSPVSQSCPLCEYINFKIQPLRYHLPGLSEKITFAPKTLCRNLFSQHEGLKQLICEEMGSVSKGSLIFSRSWSLDLGLQENHKVLCDALLISQDKPPVLYTFHMVQDEEFKGYSTQTAQTLKQKLAKIGGYTKKVCVMTKIFYLSPEGKTSCQYDLNSQVIYPESYYWTTAQTMKDLEKALSNILPKENQIFLFVCLFRFCLFVCLFVFFLR</sequence>
<reference key="1">
    <citation type="submission" date="2004-11" db="EMBL/GenBank/DDBJ databases">
        <authorList>
            <consortium name="The German cDNA consortium"/>
        </authorList>
    </citation>
    <scope>NUCLEOTIDE SEQUENCE [LARGE SCALE MRNA]</scope>
    <source>
        <tissue>Heart</tissue>
    </source>
</reference>
<comment type="subcellular location">
    <subcellularLocation>
        <location>Membrane</location>
        <topology>Single-pass membrane protein</topology>
    </subcellularLocation>
</comment>
<comment type="similarity">
    <text evidence="2">Belongs to the Schlafen family.</text>
</comment>
<comment type="caution">
    <text evidence="2">It is uncertain whether Met-1 or Met-33 is the initiator.</text>
</comment>
<gene>
    <name type="primary">SLFN12L</name>
</gene>
<organism>
    <name type="scientific">Pongo abelii</name>
    <name type="common">Sumatran orangutan</name>
    <name type="synonym">Pongo pygmaeus abelii</name>
    <dbReference type="NCBI Taxonomy" id="9601"/>
    <lineage>
        <taxon>Eukaryota</taxon>
        <taxon>Metazoa</taxon>
        <taxon>Chordata</taxon>
        <taxon>Craniata</taxon>
        <taxon>Vertebrata</taxon>
        <taxon>Euteleostomi</taxon>
        <taxon>Mammalia</taxon>
        <taxon>Eutheria</taxon>
        <taxon>Euarchontoglires</taxon>
        <taxon>Primates</taxon>
        <taxon>Haplorrhini</taxon>
        <taxon>Catarrhini</taxon>
        <taxon>Hominidae</taxon>
        <taxon>Pongo</taxon>
    </lineage>
</organism>
<proteinExistence type="evidence at transcript level"/>
<evidence type="ECO:0000255" key="1"/>
<evidence type="ECO:0000305" key="2"/>
<dbReference type="EMBL" id="CR858120">
    <property type="protein sequence ID" value="CAH90359.1"/>
    <property type="molecule type" value="mRNA"/>
</dbReference>
<dbReference type="RefSeq" id="NP_001129013.1">
    <property type="nucleotide sequence ID" value="NM_001135541.2"/>
</dbReference>
<dbReference type="SMR" id="Q5RCZ8"/>
<dbReference type="FunCoup" id="Q5RCZ8">
    <property type="interactions" value="1"/>
</dbReference>
<dbReference type="STRING" id="9601.ENSPPYP00000009204"/>
<dbReference type="GeneID" id="100190853"/>
<dbReference type="KEGG" id="pon:100190853"/>
<dbReference type="CTD" id="100506736"/>
<dbReference type="eggNOG" id="ENOG502RU3F">
    <property type="taxonomic scope" value="Eukaryota"/>
</dbReference>
<dbReference type="InParanoid" id="Q5RCZ8"/>
<dbReference type="OrthoDB" id="9627223at2759"/>
<dbReference type="Proteomes" id="UP000001595">
    <property type="component" value="Unplaced"/>
</dbReference>
<dbReference type="GO" id="GO:0016020">
    <property type="term" value="C:membrane"/>
    <property type="evidence" value="ECO:0007669"/>
    <property type="project" value="UniProtKB-SubCell"/>
</dbReference>
<dbReference type="FunFam" id="3.30.950.30:FF:000001">
    <property type="entry name" value="Schlafen family member 14"/>
    <property type="match status" value="1"/>
</dbReference>
<dbReference type="Gene3D" id="3.30.950.30">
    <property type="entry name" value="Schlafen, AAA domain"/>
    <property type="match status" value="1"/>
</dbReference>
<dbReference type="InterPro" id="IPR031450">
    <property type="entry name" value="Poxin-SLFN/SLFN_N"/>
</dbReference>
<dbReference type="InterPro" id="IPR029684">
    <property type="entry name" value="Schlafen"/>
</dbReference>
<dbReference type="InterPro" id="IPR007421">
    <property type="entry name" value="Schlafen_AlbA_2_dom"/>
</dbReference>
<dbReference type="InterPro" id="IPR038461">
    <property type="entry name" value="Schlafen_AlbA_2_dom_sf"/>
</dbReference>
<dbReference type="InterPro" id="IPR048729">
    <property type="entry name" value="SLFN_GTPase-like"/>
</dbReference>
<dbReference type="PANTHER" id="PTHR12155">
    <property type="entry name" value="SCHLAFEN"/>
    <property type="match status" value="1"/>
</dbReference>
<dbReference type="PANTHER" id="PTHR12155:SF46">
    <property type="entry name" value="SCHLAFEN FAMILY MEMBER 12-LIKE"/>
    <property type="match status" value="1"/>
</dbReference>
<dbReference type="Pfam" id="PF17057">
    <property type="entry name" value="B3R"/>
    <property type="match status" value="1"/>
</dbReference>
<dbReference type="Pfam" id="PF04326">
    <property type="entry name" value="SLFN_AlbA_2"/>
    <property type="match status" value="1"/>
</dbReference>
<dbReference type="Pfam" id="PF21026">
    <property type="entry name" value="SLFN_GTPase-like"/>
    <property type="match status" value="1"/>
</dbReference>
<name>SN12L_PONAB</name>
<accession>Q5RCZ8</accession>
<protein>
    <recommendedName>
        <fullName>Schlafen family member 12-like</fullName>
    </recommendedName>
</protein>